<gene>
    <name evidence="1" type="primary">ispF</name>
    <name type="ordered locus">Pmob_1172</name>
</gene>
<accession>A9BHL8</accession>
<comment type="function">
    <text evidence="1">Involved in the biosynthesis of isopentenyl diphosphate (IPP) and dimethylallyl diphosphate (DMAPP), two major building blocks of isoprenoid compounds. Catalyzes the conversion of 4-diphosphocytidyl-2-C-methyl-D-erythritol 2-phosphate (CDP-ME2P) to 2-C-methyl-D-erythritol 2,4-cyclodiphosphate (ME-CPP) with a corresponding release of cytidine 5-monophosphate (CMP).</text>
</comment>
<comment type="catalytic activity">
    <reaction evidence="1">
        <text>4-CDP-2-C-methyl-D-erythritol 2-phosphate = 2-C-methyl-D-erythritol 2,4-cyclic diphosphate + CMP</text>
        <dbReference type="Rhea" id="RHEA:23864"/>
        <dbReference type="ChEBI" id="CHEBI:57919"/>
        <dbReference type="ChEBI" id="CHEBI:58483"/>
        <dbReference type="ChEBI" id="CHEBI:60377"/>
        <dbReference type="EC" id="4.6.1.12"/>
    </reaction>
</comment>
<comment type="cofactor">
    <cofactor evidence="1">
        <name>a divalent metal cation</name>
        <dbReference type="ChEBI" id="CHEBI:60240"/>
    </cofactor>
    <text evidence="1">Binds 1 divalent metal cation per subunit.</text>
</comment>
<comment type="pathway">
    <text evidence="1">Isoprenoid biosynthesis; isopentenyl diphosphate biosynthesis via DXP pathway; isopentenyl diphosphate from 1-deoxy-D-xylulose 5-phosphate: step 4/6.</text>
</comment>
<comment type="subunit">
    <text evidence="1">Homotrimer.</text>
</comment>
<comment type="similarity">
    <text evidence="1">Belongs to the IspF family.</text>
</comment>
<sequence length="162" mass="17567">MLKIGFGYDVHPFAENRRLILGGVVINHPKGYGLLGHSDGDVFFHALIDSLLGMCGLGSIGEYFPESKEFENISSSILLEKTIDLINKRYIVKINNIDVVIISKSVNISSITGQIKNNTSCILNLEVSRINLKGKSGNGLGVGGNDQGIEVYCTILGEIDEI</sequence>
<evidence type="ECO:0000255" key="1">
    <source>
        <dbReference type="HAMAP-Rule" id="MF_00107"/>
    </source>
</evidence>
<proteinExistence type="inferred from homology"/>
<name>ISPF_PETMO</name>
<keyword id="KW-0414">Isoprene biosynthesis</keyword>
<keyword id="KW-0456">Lyase</keyword>
<keyword id="KW-0479">Metal-binding</keyword>
<reference key="1">
    <citation type="submission" date="2007-11" db="EMBL/GenBank/DDBJ databases">
        <title>Complete sequence of Petroga mobilis SJ95.</title>
        <authorList>
            <consortium name="US DOE Joint Genome Institute"/>
            <person name="Copeland A."/>
            <person name="Lucas S."/>
            <person name="Lapidus A."/>
            <person name="Barry K."/>
            <person name="Glavina del Rio T."/>
            <person name="Dalin E."/>
            <person name="Tice H."/>
            <person name="Pitluck S."/>
            <person name="Meincke L."/>
            <person name="Brettin T."/>
            <person name="Bruce D."/>
            <person name="Detter J.C."/>
            <person name="Han C."/>
            <person name="Kuske C.R."/>
            <person name="Schmutz J."/>
            <person name="Larimer F."/>
            <person name="Land M."/>
            <person name="Hauser L."/>
            <person name="Kyrpides N."/>
            <person name="Mikhailova N."/>
            <person name="Noll K."/>
            <person name="Richardson P."/>
        </authorList>
    </citation>
    <scope>NUCLEOTIDE SEQUENCE [LARGE SCALE GENOMIC DNA]</scope>
    <source>
        <strain>DSM 10674 / SJ95</strain>
    </source>
</reference>
<dbReference type="EC" id="4.6.1.12" evidence="1"/>
<dbReference type="EMBL" id="CP000879">
    <property type="protein sequence ID" value="ABX31890.1"/>
    <property type="molecule type" value="Genomic_DNA"/>
</dbReference>
<dbReference type="RefSeq" id="WP_012208991.1">
    <property type="nucleotide sequence ID" value="NC_010003.1"/>
</dbReference>
<dbReference type="SMR" id="A9BHL8"/>
<dbReference type="STRING" id="403833.Pmob_1172"/>
<dbReference type="KEGG" id="pmo:Pmob_1172"/>
<dbReference type="eggNOG" id="COG0245">
    <property type="taxonomic scope" value="Bacteria"/>
</dbReference>
<dbReference type="HOGENOM" id="CLU_084630_2_1_0"/>
<dbReference type="OrthoDB" id="9804336at2"/>
<dbReference type="UniPathway" id="UPA00056">
    <property type="reaction ID" value="UER00095"/>
</dbReference>
<dbReference type="Proteomes" id="UP000000789">
    <property type="component" value="Chromosome"/>
</dbReference>
<dbReference type="GO" id="GO:0008685">
    <property type="term" value="F:2-C-methyl-D-erythritol 2,4-cyclodiphosphate synthase activity"/>
    <property type="evidence" value="ECO:0007669"/>
    <property type="project" value="UniProtKB-UniRule"/>
</dbReference>
<dbReference type="GO" id="GO:0046872">
    <property type="term" value="F:metal ion binding"/>
    <property type="evidence" value="ECO:0007669"/>
    <property type="project" value="UniProtKB-KW"/>
</dbReference>
<dbReference type="GO" id="GO:0019288">
    <property type="term" value="P:isopentenyl diphosphate biosynthetic process, methylerythritol 4-phosphate pathway"/>
    <property type="evidence" value="ECO:0007669"/>
    <property type="project" value="UniProtKB-UniRule"/>
</dbReference>
<dbReference type="GO" id="GO:0016114">
    <property type="term" value="P:terpenoid biosynthetic process"/>
    <property type="evidence" value="ECO:0007669"/>
    <property type="project" value="InterPro"/>
</dbReference>
<dbReference type="CDD" id="cd00554">
    <property type="entry name" value="MECDP_synthase"/>
    <property type="match status" value="1"/>
</dbReference>
<dbReference type="Gene3D" id="3.30.1330.50">
    <property type="entry name" value="2-C-methyl-D-erythritol 2,4-cyclodiphosphate synthase"/>
    <property type="match status" value="1"/>
</dbReference>
<dbReference type="HAMAP" id="MF_00107">
    <property type="entry name" value="IspF"/>
    <property type="match status" value="1"/>
</dbReference>
<dbReference type="InterPro" id="IPR003526">
    <property type="entry name" value="MECDP_synthase"/>
</dbReference>
<dbReference type="InterPro" id="IPR036571">
    <property type="entry name" value="MECDP_synthase_sf"/>
</dbReference>
<dbReference type="NCBIfam" id="TIGR00151">
    <property type="entry name" value="ispF"/>
    <property type="match status" value="1"/>
</dbReference>
<dbReference type="PANTHER" id="PTHR43181">
    <property type="entry name" value="2-C-METHYL-D-ERYTHRITOL 2,4-CYCLODIPHOSPHATE SYNTHASE, CHLOROPLASTIC"/>
    <property type="match status" value="1"/>
</dbReference>
<dbReference type="PANTHER" id="PTHR43181:SF1">
    <property type="entry name" value="2-C-METHYL-D-ERYTHRITOL 2,4-CYCLODIPHOSPHATE SYNTHASE, CHLOROPLASTIC"/>
    <property type="match status" value="1"/>
</dbReference>
<dbReference type="Pfam" id="PF02542">
    <property type="entry name" value="YgbB"/>
    <property type="match status" value="1"/>
</dbReference>
<dbReference type="SUPFAM" id="SSF69765">
    <property type="entry name" value="IpsF-like"/>
    <property type="match status" value="1"/>
</dbReference>
<protein>
    <recommendedName>
        <fullName evidence="1">2-C-methyl-D-erythritol 2,4-cyclodiphosphate synthase</fullName>
        <shortName evidence="1">MECDP-synthase</shortName>
        <shortName evidence="1">MECPP-synthase</shortName>
        <shortName evidence="1">MECPS</shortName>
        <ecNumber evidence="1">4.6.1.12</ecNumber>
    </recommendedName>
</protein>
<feature type="chain" id="PRO_1000117432" description="2-C-methyl-D-erythritol 2,4-cyclodiphosphate synthase">
    <location>
        <begin position="1"/>
        <end position="162"/>
    </location>
</feature>
<feature type="binding site" evidence="1">
    <location>
        <begin position="9"/>
        <end position="11"/>
    </location>
    <ligand>
        <name>4-CDP-2-C-methyl-D-erythritol 2-phosphate</name>
        <dbReference type="ChEBI" id="CHEBI:57919"/>
    </ligand>
</feature>
<feature type="binding site" evidence="1">
    <location>
        <position position="9"/>
    </location>
    <ligand>
        <name>a divalent metal cation</name>
        <dbReference type="ChEBI" id="CHEBI:60240"/>
    </ligand>
</feature>
<feature type="binding site" evidence="1">
    <location>
        <position position="11"/>
    </location>
    <ligand>
        <name>a divalent metal cation</name>
        <dbReference type="ChEBI" id="CHEBI:60240"/>
    </ligand>
</feature>
<feature type="binding site" evidence="1">
    <location>
        <begin position="37"/>
        <end position="38"/>
    </location>
    <ligand>
        <name>4-CDP-2-C-methyl-D-erythritol 2-phosphate</name>
        <dbReference type="ChEBI" id="CHEBI:57919"/>
    </ligand>
</feature>
<feature type="binding site" evidence="1">
    <location>
        <position position="45"/>
    </location>
    <ligand>
        <name>a divalent metal cation</name>
        <dbReference type="ChEBI" id="CHEBI:60240"/>
    </ligand>
</feature>
<feature type="site" description="Transition state stabilizer" evidence="1">
    <location>
        <position position="37"/>
    </location>
</feature>
<feature type="site" description="Transition state stabilizer" evidence="1">
    <location>
        <position position="136"/>
    </location>
</feature>
<organism>
    <name type="scientific">Petrotoga mobilis (strain DSM 10674 / SJ95)</name>
    <dbReference type="NCBI Taxonomy" id="403833"/>
    <lineage>
        <taxon>Bacteria</taxon>
        <taxon>Thermotogati</taxon>
        <taxon>Thermotogota</taxon>
        <taxon>Thermotogae</taxon>
        <taxon>Petrotogales</taxon>
        <taxon>Petrotogaceae</taxon>
        <taxon>Petrotoga</taxon>
    </lineage>
</organism>